<reference key="1">
    <citation type="journal article" date="2000" name="Nucleic Acids Res.">
        <title>Complete genome sequence of the alkaliphilic bacterium Bacillus halodurans and genomic sequence comparison with Bacillus subtilis.</title>
        <authorList>
            <person name="Takami H."/>
            <person name="Nakasone K."/>
            <person name="Takaki Y."/>
            <person name="Maeno G."/>
            <person name="Sasaki R."/>
            <person name="Masui N."/>
            <person name="Fuji F."/>
            <person name="Hirama C."/>
            <person name="Nakamura Y."/>
            <person name="Ogasawara N."/>
            <person name="Kuhara S."/>
            <person name="Horikoshi K."/>
        </authorList>
    </citation>
    <scope>NUCLEOTIDE SEQUENCE [LARGE SCALE GENOMIC DNA]</scope>
    <source>
        <strain>ATCC BAA-125 / DSM 18197 / FERM 7344 / JCM 9153 / C-125</strain>
    </source>
</reference>
<feature type="chain" id="PRO_0000184787" description="Putative gamma-glutamylcyclotransferase BH1612">
    <location>
        <begin position="1"/>
        <end position="111"/>
    </location>
</feature>
<feature type="active site" description="Proton acceptor" evidence="1">
    <location>
        <position position="55"/>
    </location>
</feature>
<feature type="binding site" evidence="1">
    <location>
        <begin position="14"/>
        <end position="17"/>
    </location>
    <ligand>
        <name>substrate</name>
    </ligand>
</feature>
<sequence length="111" mass="12782">MRGARCHNRRCYVYGHLYDSGLGYPALIADEKGGKVVGELYEINEQHLVSLDELEDYAPDRNHNLYERVLHTLEDGSHCYLYVVTPDSPLVRTLIPSGDWLDWTENKKSTE</sequence>
<comment type="function">
    <text evidence="1">Putative gamma-glutamylcyclotransferase.</text>
</comment>
<comment type="similarity">
    <text evidence="2">Belongs to the gamma-glutamylcyclotransferase family.</text>
</comment>
<dbReference type="EC" id="2.3.2.-"/>
<dbReference type="EMBL" id="BA000004">
    <property type="protein sequence ID" value="BAB05331.1"/>
    <property type="molecule type" value="Genomic_DNA"/>
</dbReference>
<dbReference type="PIR" id="D83851">
    <property type="entry name" value="D83851"/>
</dbReference>
<dbReference type="SMR" id="Q9KCF9"/>
<dbReference type="STRING" id="272558.gene:10727510"/>
<dbReference type="KEGG" id="bha:BH1612"/>
<dbReference type="eggNOG" id="COG2105">
    <property type="taxonomic scope" value="Bacteria"/>
</dbReference>
<dbReference type="HOGENOM" id="CLU_083466_2_3_9"/>
<dbReference type="Proteomes" id="UP000001258">
    <property type="component" value="Chromosome"/>
</dbReference>
<dbReference type="GO" id="GO:0016746">
    <property type="term" value="F:acyltransferase activity"/>
    <property type="evidence" value="ECO:0007669"/>
    <property type="project" value="UniProtKB-KW"/>
</dbReference>
<dbReference type="CDD" id="cd06661">
    <property type="entry name" value="GGCT_like"/>
    <property type="match status" value="1"/>
</dbReference>
<dbReference type="Gene3D" id="3.10.490.10">
    <property type="entry name" value="Gamma-glutamyl cyclotransferase-like"/>
    <property type="match status" value="1"/>
</dbReference>
<dbReference type="InterPro" id="IPR009288">
    <property type="entry name" value="AIG2-like_dom"/>
</dbReference>
<dbReference type="InterPro" id="IPR013024">
    <property type="entry name" value="GGCT-like"/>
</dbReference>
<dbReference type="InterPro" id="IPR036568">
    <property type="entry name" value="GGCT-like_sf"/>
</dbReference>
<dbReference type="Pfam" id="PF06094">
    <property type="entry name" value="GGACT"/>
    <property type="match status" value="1"/>
</dbReference>
<dbReference type="SUPFAM" id="SSF110857">
    <property type="entry name" value="Gamma-glutamyl cyclotransferase-like"/>
    <property type="match status" value="1"/>
</dbReference>
<accession>Q9KCF9</accession>
<evidence type="ECO:0000250" key="1"/>
<evidence type="ECO:0000305" key="2"/>
<gene>
    <name type="ordered locus">BH1612</name>
</gene>
<organism>
    <name type="scientific">Halalkalibacterium halodurans (strain ATCC BAA-125 / DSM 18197 / FERM 7344 / JCM 9153 / C-125)</name>
    <name type="common">Bacillus halodurans</name>
    <dbReference type="NCBI Taxonomy" id="272558"/>
    <lineage>
        <taxon>Bacteria</taxon>
        <taxon>Bacillati</taxon>
        <taxon>Bacillota</taxon>
        <taxon>Bacilli</taxon>
        <taxon>Bacillales</taxon>
        <taxon>Bacillaceae</taxon>
        <taxon>Halalkalibacterium (ex Joshi et al. 2022)</taxon>
    </lineage>
</organism>
<protein>
    <recommendedName>
        <fullName>Putative gamma-glutamylcyclotransferase BH1612</fullName>
        <ecNumber>2.3.2.-</ecNumber>
    </recommendedName>
</protein>
<proteinExistence type="inferred from homology"/>
<keyword id="KW-0012">Acyltransferase</keyword>
<keyword id="KW-1185">Reference proteome</keyword>
<keyword id="KW-0808">Transferase</keyword>
<name>Y1612_HALH5</name>